<reference key="1">
    <citation type="journal article" date="1998" name="Trends Plant Sci.">
        <title>GPI-anchors on arabinogalactan-proteins: implications for signalling in plants.</title>
        <authorList>
            <person name="Schultz C.J."/>
            <person name="Gilson P.R."/>
            <person name="Oxley D."/>
            <person name="Youl J.J."/>
            <person name="Bacic A."/>
        </authorList>
    </citation>
    <scope>NUCLEOTIDE SEQUENCE [MRNA]</scope>
    <source>
        <strain>cv. Columbia</strain>
    </source>
</reference>
<reference key="2">
    <citation type="journal article" date="1999" name="Nature">
        <title>Sequence and analysis of chromosome 2 of the plant Arabidopsis thaliana.</title>
        <authorList>
            <person name="Lin X."/>
            <person name="Kaul S."/>
            <person name="Rounsley S.D."/>
            <person name="Shea T.P."/>
            <person name="Benito M.-I."/>
            <person name="Town C.D."/>
            <person name="Fujii C.Y."/>
            <person name="Mason T.M."/>
            <person name="Bowman C.L."/>
            <person name="Barnstead M.E."/>
            <person name="Feldblyum T.V."/>
            <person name="Buell C.R."/>
            <person name="Ketchum K.A."/>
            <person name="Lee J.J."/>
            <person name="Ronning C.M."/>
            <person name="Koo H.L."/>
            <person name="Moffat K.S."/>
            <person name="Cronin L.A."/>
            <person name="Shen M."/>
            <person name="Pai G."/>
            <person name="Van Aken S."/>
            <person name="Umayam L."/>
            <person name="Tallon L.J."/>
            <person name="Gill J.E."/>
            <person name="Adams M.D."/>
            <person name="Carrera A.J."/>
            <person name="Creasy T.H."/>
            <person name="Goodman H.M."/>
            <person name="Somerville C.R."/>
            <person name="Copenhaver G.P."/>
            <person name="Preuss D."/>
            <person name="Nierman W.C."/>
            <person name="White O."/>
            <person name="Eisen J.A."/>
            <person name="Salzberg S.L."/>
            <person name="Fraser C.M."/>
            <person name="Venter J.C."/>
        </authorList>
    </citation>
    <scope>NUCLEOTIDE SEQUENCE [LARGE SCALE GENOMIC DNA]</scope>
    <source>
        <strain>cv. Columbia</strain>
    </source>
</reference>
<reference key="3">
    <citation type="journal article" date="2017" name="Plant J.">
        <title>Araport11: a complete reannotation of the Arabidopsis thaliana reference genome.</title>
        <authorList>
            <person name="Cheng C.Y."/>
            <person name="Krishnakumar V."/>
            <person name="Chan A.P."/>
            <person name="Thibaud-Nissen F."/>
            <person name="Schobel S."/>
            <person name="Town C.D."/>
        </authorList>
    </citation>
    <scope>GENOME REANNOTATION</scope>
    <source>
        <strain>cv. Columbia</strain>
    </source>
</reference>
<reference key="4">
    <citation type="journal article" date="2003" name="Science">
        <title>Empirical analysis of transcriptional activity in the Arabidopsis genome.</title>
        <authorList>
            <person name="Yamada K."/>
            <person name="Lim J."/>
            <person name="Dale J.M."/>
            <person name="Chen H."/>
            <person name="Shinn P."/>
            <person name="Palm C.J."/>
            <person name="Southwick A.M."/>
            <person name="Wu H.C."/>
            <person name="Kim C.J."/>
            <person name="Nguyen M."/>
            <person name="Pham P.K."/>
            <person name="Cheuk R.F."/>
            <person name="Karlin-Newmann G."/>
            <person name="Liu S.X."/>
            <person name="Lam B."/>
            <person name="Sakano H."/>
            <person name="Wu T."/>
            <person name="Yu G."/>
            <person name="Miranda M."/>
            <person name="Quach H.L."/>
            <person name="Tripp M."/>
            <person name="Chang C.H."/>
            <person name="Lee J.M."/>
            <person name="Toriumi M.J."/>
            <person name="Chan M.M."/>
            <person name="Tang C.C."/>
            <person name="Onodera C.S."/>
            <person name="Deng J.M."/>
            <person name="Akiyama K."/>
            <person name="Ansari Y."/>
            <person name="Arakawa T."/>
            <person name="Banh J."/>
            <person name="Banno F."/>
            <person name="Bowser L."/>
            <person name="Brooks S.Y."/>
            <person name="Carninci P."/>
            <person name="Chao Q."/>
            <person name="Choy N."/>
            <person name="Enju A."/>
            <person name="Goldsmith A.D."/>
            <person name="Gurjal M."/>
            <person name="Hansen N.F."/>
            <person name="Hayashizaki Y."/>
            <person name="Johnson-Hopson C."/>
            <person name="Hsuan V.W."/>
            <person name="Iida K."/>
            <person name="Karnes M."/>
            <person name="Khan S."/>
            <person name="Koesema E."/>
            <person name="Ishida J."/>
            <person name="Jiang P.X."/>
            <person name="Jones T."/>
            <person name="Kawai J."/>
            <person name="Kamiya A."/>
            <person name="Meyers C."/>
            <person name="Nakajima M."/>
            <person name="Narusaka M."/>
            <person name="Seki M."/>
            <person name="Sakurai T."/>
            <person name="Satou M."/>
            <person name="Tamse R."/>
            <person name="Vaysberg M."/>
            <person name="Wallender E.K."/>
            <person name="Wong C."/>
            <person name="Yamamura Y."/>
            <person name="Yuan S."/>
            <person name="Shinozaki K."/>
            <person name="Davis R.W."/>
            <person name="Theologis A."/>
            <person name="Ecker J.R."/>
        </authorList>
    </citation>
    <scope>NUCLEOTIDE SEQUENCE [LARGE SCALE MRNA]</scope>
    <source>
        <strain>cv. Columbia</strain>
    </source>
</reference>
<reference key="5">
    <citation type="journal article" date="2000" name="Plant Cell">
        <title>The classical arabinogalactan protein gene family of Arabidopsis.</title>
        <authorList>
            <person name="Schultz C.J."/>
            <person name="Johnson K.L."/>
            <person name="Currie G."/>
            <person name="Bacic A."/>
        </authorList>
    </citation>
    <scope>PROTEIN SEQUENCE OF 22-37</scope>
    <scope>HYDROXYLATION AT PRO-24; PRO-26; PRO-28; PRO-34 AND PRO-35</scope>
    <scope>PYROGLUTAMATE FORMATION AT GLN-22</scope>
    <source>
        <strain>cv. Columbia</strain>
    </source>
</reference>
<reference key="6">
    <citation type="journal article" date="2002" name="Plant Physiol.">
        <title>Using genomic resources to guide research directions. The arabinogalactan protein gene family as a test case.</title>
        <authorList>
            <person name="Schultz C.J."/>
            <person name="Rumsewicz M.P."/>
            <person name="Johnson K.L."/>
            <person name="Jones B.J."/>
            <person name="Gaspar Y.M."/>
            <person name="Bacic A."/>
        </authorList>
    </citation>
    <scope>GENE FAMILY</scope>
    <scope>NOMENCLATURE</scope>
    <scope>INDUCTION</scope>
</reference>
<sequence length="131" mass="12582">MNSKAMQALIFLGFLATSCLAQAPAPAPTTVTPPPTALPPVTAETPSPIASPPVPVNEPTPAPTTSPTTSPVASPPQTDAPAPGPSAGLTPTSSPAPGPDGAADAPSAAWANKAFLVGTAVAGALYAVVLA</sequence>
<comment type="function">
    <text>Proteoglycan that seems to be implicated in diverse developmental roles such as differentiation, cell-cell recognition, embryogenesis and programmed cell death.</text>
</comment>
<comment type="subcellular location">
    <subcellularLocation>
        <location evidence="5">Cell membrane</location>
        <topology evidence="5">Lipid-anchor</topology>
        <topology evidence="5">GPI-anchor</topology>
    </subcellularLocation>
</comment>
<comment type="induction">
    <text evidence="4">By Al treatment.</text>
</comment>
<comment type="PTM">
    <text>O-glycosylated on hydroxyprolines; noncontiguous hydroxylproline residues are glycosylated with arabinogalactan.</text>
</comment>
<comment type="similarity">
    <text evidence="5">Belongs to the classical AGP family.</text>
</comment>
<comment type="sequence caution" evidence="5">
    <conflict type="erroneous initiation">
        <sequence resource="EMBL-CDS" id="AAC77824"/>
    </conflict>
</comment>
<evidence type="ECO:0000255" key="1"/>
<evidence type="ECO:0000256" key="2">
    <source>
        <dbReference type="SAM" id="MobiDB-lite"/>
    </source>
</evidence>
<evidence type="ECO:0000269" key="3">
    <source>
    </source>
</evidence>
<evidence type="ECO:0000269" key="4">
    <source>
    </source>
</evidence>
<evidence type="ECO:0000305" key="5"/>
<accession>Q9SJY7</accession>
<accession>Q9ZT18</accession>
<organism>
    <name type="scientific">Arabidopsis thaliana</name>
    <name type="common">Mouse-ear cress</name>
    <dbReference type="NCBI Taxonomy" id="3702"/>
    <lineage>
        <taxon>Eukaryota</taxon>
        <taxon>Viridiplantae</taxon>
        <taxon>Streptophyta</taxon>
        <taxon>Embryophyta</taxon>
        <taxon>Tracheophyta</taxon>
        <taxon>Spermatophyta</taxon>
        <taxon>Magnoliopsida</taxon>
        <taxon>eudicotyledons</taxon>
        <taxon>Gunneridae</taxon>
        <taxon>Pentapetalae</taxon>
        <taxon>rosids</taxon>
        <taxon>malvids</taxon>
        <taxon>Brassicales</taxon>
        <taxon>Brassicaceae</taxon>
        <taxon>Camelineae</taxon>
        <taxon>Arabidopsis</taxon>
    </lineage>
</organism>
<proteinExistence type="evidence at protein level"/>
<keyword id="KW-1003">Cell membrane</keyword>
<keyword id="KW-0903">Direct protein sequencing</keyword>
<keyword id="KW-0325">Glycoprotein</keyword>
<keyword id="KW-0336">GPI-anchor</keyword>
<keyword id="KW-0379">Hydroxylation</keyword>
<keyword id="KW-0449">Lipoprotein</keyword>
<keyword id="KW-0472">Membrane</keyword>
<keyword id="KW-0654">Proteoglycan</keyword>
<keyword id="KW-0873">Pyrrolidone carboxylic acid</keyword>
<keyword id="KW-1185">Reference proteome</keyword>
<keyword id="KW-0732">Signal</keyword>
<name>AGP2_ARATH</name>
<dbReference type="EMBL" id="AF082299">
    <property type="protein sequence ID" value="AAC77824.1"/>
    <property type="status" value="ALT_INIT"/>
    <property type="molecule type" value="mRNA"/>
</dbReference>
<dbReference type="EMBL" id="AC006592">
    <property type="protein sequence ID" value="AAD22366.1"/>
    <property type="molecule type" value="Genomic_DNA"/>
</dbReference>
<dbReference type="EMBL" id="CP002685">
    <property type="protein sequence ID" value="AEC07309.1"/>
    <property type="molecule type" value="Genomic_DNA"/>
</dbReference>
<dbReference type="EMBL" id="AY062726">
    <property type="protein sequence ID" value="AAL32804.1"/>
    <property type="molecule type" value="mRNA"/>
</dbReference>
<dbReference type="EMBL" id="AY093356">
    <property type="protein sequence ID" value="AAM13355.1"/>
    <property type="molecule type" value="mRNA"/>
</dbReference>
<dbReference type="PIR" id="A84613">
    <property type="entry name" value="A84613"/>
</dbReference>
<dbReference type="RefSeq" id="NP_565537.1">
    <property type="nucleotide sequence ID" value="NM_127812.3"/>
</dbReference>
<dbReference type="FunCoup" id="Q9SJY7">
    <property type="interactions" value="5"/>
</dbReference>
<dbReference type="STRING" id="3702.Q9SJY7"/>
<dbReference type="GlyCosmos" id="Q9SJY7">
    <property type="glycosylation" value="5 sites, No reported glycans"/>
</dbReference>
<dbReference type="GlyGen" id="Q9SJY7">
    <property type="glycosylation" value="2 sites"/>
</dbReference>
<dbReference type="PaxDb" id="3702-AT2G22470.1"/>
<dbReference type="EnsemblPlants" id="AT2G22470.1">
    <property type="protein sequence ID" value="AT2G22470.1"/>
    <property type="gene ID" value="AT2G22470"/>
</dbReference>
<dbReference type="GeneID" id="816779"/>
<dbReference type="Gramene" id="AT2G22470.1">
    <property type="protein sequence ID" value="AT2G22470.1"/>
    <property type="gene ID" value="AT2G22470"/>
</dbReference>
<dbReference type="KEGG" id="ath:AT2G22470"/>
<dbReference type="Araport" id="AT2G22470"/>
<dbReference type="TAIR" id="AT2G22470">
    <property type="gene designation" value="AGP2"/>
</dbReference>
<dbReference type="eggNOG" id="ENOG502SF2J">
    <property type="taxonomic scope" value="Eukaryota"/>
</dbReference>
<dbReference type="HOGENOM" id="CLU_149596_0_0_1"/>
<dbReference type="InParanoid" id="Q9SJY7"/>
<dbReference type="OMA" id="TISWIAV"/>
<dbReference type="PRO" id="PR:Q9SJY7"/>
<dbReference type="Proteomes" id="UP000006548">
    <property type="component" value="Chromosome 2"/>
</dbReference>
<dbReference type="GO" id="GO:0005737">
    <property type="term" value="C:cytoplasm"/>
    <property type="evidence" value="ECO:0007005"/>
    <property type="project" value="TAIR"/>
</dbReference>
<dbReference type="GO" id="GO:0005886">
    <property type="term" value="C:plasma membrane"/>
    <property type="evidence" value="ECO:0007669"/>
    <property type="project" value="UniProtKB-SubCell"/>
</dbReference>
<dbReference type="GO" id="GO:0098552">
    <property type="term" value="C:side of membrane"/>
    <property type="evidence" value="ECO:0007669"/>
    <property type="project" value="UniProtKB-KW"/>
</dbReference>
<dbReference type="InterPro" id="IPR044959">
    <property type="entry name" value="AGP"/>
</dbReference>
<dbReference type="PANTHER" id="PTHR36321:SF23">
    <property type="entry name" value="CLASSICAL ARABINOGALACTAN PROTEIN 2"/>
    <property type="match status" value="1"/>
</dbReference>
<dbReference type="PANTHER" id="PTHR36321">
    <property type="entry name" value="CLASSICAL ARABINOGALACTAN PROTEIN 9"/>
    <property type="match status" value="1"/>
</dbReference>
<gene>
    <name type="primary">AGP2</name>
    <name type="ordered locus">At2g22470</name>
    <name type="ORF">F14M13.13</name>
</gene>
<feature type="signal peptide" evidence="3">
    <location>
        <begin position="1"/>
        <end position="21"/>
    </location>
</feature>
<feature type="chain" id="PRO_0000268987" description="Classical arabinogalactan protein 2">
    <location>
        <begin position="22"/>
        <end position="107"/>
    </location>
</feature>
<feature type="propeptide" id="PRO_0000268988" description="Removed in mature form" evidence="1">
    <location>
        <begin position="108"/>
        <end position="131"/>
    </location>
</feature>
<feature type="region of interest" description="Disordered" evidence="2">
    <location>
        <begin position="24"/>
        <end position="106"/>
    </location>
</feature>
<feature type="compositionally biased region" description="Pro residues" evidence="2">
    <location>
        <begin position="25"/>
        <end position="38"/>
    </location>
</feature>
<feature type="compositionally biased region" description="Pro residues" evidence="2">
    <location>
        <begin position="49"/>
        <end position="64"/>
    </location>
</feature>
<feature type="compositionally biased region" description="Low complexity" evidence="2">
    <location>
        <begin position="65"/>
        <end position="76"/>
    </location>
</feature>
<feature type="compositionally biased region" description="Low complexity" evidence="2">
    <location>
        <begin position="90"/>
        <end position="106"/>
    </location>
</feature>
<feature type="modified residue" description="Pyrrolidone carboxylic acid" evidence="3">
    <location>
        <position position="22"/>
    </location>
</feature>
<feature type="modified residue" description="4-hydroxyproline" evidence="3">
    <location>
        <position position="24"/>
    </location>
</feature>
<feature type="modified residue" description="4-hydroxyproline" evidence="3">
    <location>
        <position position="26"/>
    </location>
</feature>
<feature type="modified residue" description="4-hydroxyproline" evidence="3">
    <location>
        <position position="28"/>
    </location>
</feature>
<feature type="modified residue" description="4-hydroxyproline" evidence="3">
    <location>
        <position position="34"/>
    </location>
</feature>
<feature type="modified residue" description="4-hydroxyproline" evidence="3">
    <location>
        <position position="35"/>
    </location>
</feature>
<feature type="lipid moiety-binding region" description="GPI-anchor amidated serine" evidence="1">
    <location>
        <position position="107"/>
    </location>
</feature>
<feature type="glycosylation site" description="O-linked (Ara...) hydroxyproline" evidence="1">
    <location>
        <position position="24"/>
    </location>
</feature>
<feature type="glycosylation site" description="O-linked (Ara...) hydroxyproline" evidence="1">
    <location>
        <position position="26"/>
    </location>
</feature>
<feature type="glycosylation site" description="O-linked (Ara...) hydroxyproline" evidence="1">
    <location>
        <position position="28"/>
    </location>
</feature>
<feature type="glycosylation site" description="O-linked (Ara...) hydroxyproline" evidence="1">
    <location>
        <position position="34"/>
    </location>
</feature>
<feature type="glycosylation site" description="O-linked (Ara...) hydroxyproline" evidence="1">
    <location>
        <position position="35"/>
    </location>
</feature>
<protein>
    <recommendedName>
        <fullName>Classical arabinogalactan protein 2</fullName>
    </recommendedName>
</protein>